<protein>
    <recommendedName>
        <fullName>Auxin-responsive protein IAA9</fullName>
    </recommendedName>
    <alternativeName>
        <fullName>Indoleacetic acid-induced protein 9</fullName>
    </alternativeName>
</protein>
<gene>
    <name type="primary">IAA9</name>
    <name type="ordered locus">At5g65670</name>
    <name type="ORF">F6H11.210</name>
    <name type="ORF">MPA24.1</name>
</gene>
<feature type="chain" id="PRO_0000112840" description="Auxin-responsive protein IAA9">
    <location>
        <begin position="1"/>
        <end position="338"/>
    </location>
</feature>
<feature type="domain" description="PB1" evidence="2">
    <location>
        <begin position="216"/>
        <end position="318"/>
    </location>
</feature>
<feature type="region of interest" description="Disordered" evidence="3">
    <location>
        <begin position="1"/>
        <end position="25"/>
    </location>
</feature>
<feature type="region of interest" description="Disordered" evidence="3">
    <location>
        <begin position="150"/>
        <end position="186"/>
    </location>
</feature>
<feature type="short sequence motif" description="EAR-like (transcriptional repression)">
    <location>
        <begin position="68"/>
        <end position="72"/>
    </location>
</feature>
<feature type="compositionally biased region" description="Low complexity" evidence="3">
    <location>
        <begin position="9"/>
        <end position="21"/>
    </location>
</feature>
<feature type="compositionally biased region" description="Low complexity" evidence="3">
    <location>
        <begin position="168"/>
        <end position="180"/>
    </location>
</feature>
<feature type="sequence conflict" description="In Ref. 6; AAM64650." evidence="8" ref="6">
    <original>S</original>
    <variation>T</variation>
    <location>
        <position position="9"/>
    </location>
</feature>
<comment type="function">
    <text evidence="5">Aux/IAA proteins are short-lived transcriptional factors that function as repressors of early auxin response genes at low auxin concentrations. Repression is thought to result from the interaction with auxin response factors (ARFs), proteins that bind to the auxin-responsive promoter element (AuxRE). Formation of heterodimers with ARF proteins may alter their ability to modulate early auxin response genes expression.</text>
</comment>
<comment type="subunit">
    <text evidence="1 6">Homodimers and heterodimers (By similarity). Interacts with TPL.</text>
</comment>
<comment type="interaction">
    <interactant intactId="EBI-632216">
        <id>Q38827</id>
    </interactant>
    <interactant intactId="EBI-25523851">
        <id>Q9FIK2</id>
        <label>At5g47790</label>
    </interactant>
    <organismsDiffer>false</organismsDiffer>
    <experiments>3</experiments>
</comment>
<comment type="interaction">
    <interactant intactId="EBI-632216">
        <id>Q38827</id>
    </interactant>
    <interactant intactId="EBI-15192745">
        <id>Q9LST3</id>
        <label>At5g60142</label>
    </interactant>
    <organismsDiffer>false</organismsDiffer>
    <experiments>3</experiments>
</comment>
<comment type="interaction">
    <interactant intactId="EBI-632216">
        <id>Q38827</id>
    </interactant>
    <interactant intactId="EBI-630505">
        <id>P49677</id>
        <label>IAA1</label>
    </interactant>
    <organismsDiffer>false</organismsDiffer>
    <experiments>5</experiments>
</comment>
<comment type="interaction">
    <interactant intactId="EBI-632216">
        <id>Q38827</id>
    </interactant>
    <interactant intactId="EBI-3946434">
        <id>Q38828</id>
        <label>IAA10</label>
    </interactant>
    <organismsDiffer>false</organismsDiffer>
    <experiments>4</experiments>
</comment>
<comment type="interaction">
    <interactant intactId="EBI-632216">
        <id>Q38827</id>
    </interactant>
    <interactant intactId="EBI-1554143">
        <id>Q38831</id>
        <label>IAA13</label>
    </interactant>
    <organismsDiffer>false</organismsDiffer>
    <experiments>4</experiments>
</comment>
<comment type="interaction">
    <interactant intactId="EBI-632216">
        <id>Q38827</id>
    </interactant>
    <interactant intactId="EBI-25524519">
        <id>A0A2H1ZEF6</id>
        <label>IAA15</label>
    </interactant>
    <organismsDiffer>false</organismsDiffer>
    <experiments>3</experiments>
</comment>
<comment type="interaction">
    <interactant intactId="EBI-632216">
        <id>Q38827</id>
    </interactant>
    <interactant intactId="EBI-632231">
        <id>O24407</id>
        <label>IAA16</label>
    </interactant>
    <organismsDiffer>false</organismsDiffer>
    <experiments>4</experiments>
</comment>
<comment type="interaction">
    <interactant intactId="EBI-632216">
        <id>Q38827</id>
    </interactant>
    <interactant intactId="EBI-632243">
        <id>P93830</id>
        <label>IAA17</label>
    </interactant>
    <organismsDiffer>false</organismsDiffer>
    <experiments>4</experiments>
</comment>
<comment type="interaction">
    <interactant intactId="EBI-632216">
        <id>Q38827</id>
    </interactant>
    <interactant intactId="EBI-632257">
        <id>O24409</id>
        <label>IAA19</label>
    </interactant>
    <organismsDiffer>false</organismsDiffer>
    <experiments>4</experiments>
</comment>
<comment type="interaction">
    <interactant intactId="EBI-632216">
        <id>Q38827</id>
    </interactant>
    <interactant intactId="EBI-632343">
        <id>P49678</id>
        <label>IAA2</label>
    </interactant>
    <organismsDiffer>false</organismsDiffer>
    <experiments>4</experiments>
</comment>
<comment type="interaction">
    <interactant intactId="EBI-632216">
        <id>Q38827</id>
    </interactant>
    <interactant intactId="EBI-632272">
        <id>O24410</id>
        <label>IAA20</label>
    </interactant>
    <organismsDiffer>false</organismsDiffer>
    <experiments>3</experiments>
</comment>
<comment type="interaction">
    <interactant intactId="EBI-632216">
        <id>Q38827</id>
    </interactant>
    <interactant intactId="EBI-3947418">
        <id>Q8LAL2</id>
        <label>IAA26</label>
    </interactant>
    <organismsDiffer>false</organismsDiffer>
    <experiments>4</experiments>
</comment>
<comment type="interaction">
    <interactant intactId="EBI-632216">
        <id>Q38827</id>
    </interactant>
    <interactant intactId="EBI-3946677">
        <id>Q9ZSY8</id>
        <label>IAA27</label>
    </interactant>
    <organismsDiffer>false</organismsDiffer>
    <experiments>4</experiments>
</comment>
<comment type="interaction">
    <interactant intactId="EBI-632216">
        <id>Q38827</id>
    </interactant>
    <interactant intactId="EBI-3133404">
        <id>Q9XFM0</id>
        <label>IAA28</label>
    </interactant>
    <organismsDiffer>false</organismsDiffer>
    <experiments>4</experiments>
</comment>
<comment type="interaction">
    <interactant intactId="EBI-632216">
        <id>Q38827</id>
    </interactant>
    <interactant intactId="EBI-307174">
        <id>Q38822</id>
        <label>IAA3</label>
    </interactant>
    <organismsDiffer>false</organismsDiffer>
    <experiments>4</experiments>
</comment>
<comment type="interaction">
    <interactant intactId="EBI-632216">
        <id>Q38827</id>
    </interactant>
    <interactant intactId="EBI-3946408">
        <id>Q8H174</id>
        <label>IAA31</label>
    </interactant>
    <organismsDiffer>false</organismsDiffer>
    <experiments>3</experiments>
</comment>
<comment type="interaction">
    <interactant intactId="EBI-632216">
        <id>Q38827</id>
    </interactant>
    <interactant intactId="EBI-3946459">
        <id>Q9C5X0</id>
        <label>IAA34</label>
    </interactant>
    <organismsDiffer>false</organismsDiffer>
    <experiments>4</experiments>
</comment>
<comment type="interaction">
    <interactant intactId="EBI-632216">
        <id>Q38827</id>
    </interactant>
    <interactant intactId="EBI-632187">
        <id>P33077</id>
        <label>IAA4</label>
    </interactant>
    <organismsDiffer>false</organismsDiffer>
    <experiments>4</experiments>
</comment>
<comment type="interaction">
    <interactant intactId="EBI-632216">
        <id>Q38827</id>
    </interactant>
    <interactant intactId="EBI-1554124">
        <id>Q38824</id>
        <label>IAA6</label>
    </interactant>
    <organismsDiffer>false</organismsDiffer>
    <experiments>3</experiments>
</comment>
<comment type="interaction">
    <interactant intactId="EBI-632216">
        <id>Q38827</id>
    </interactant>
    <interactant intactId="EBI-632200">
        <id>Q38826</id>
        <label>IAA8</label>
    </interactant>
    <organismsDiffer>false</organismsDiffer>
    <experiments>4</experiments>
</comment>
<comment type="interaction">
    <interactant intactId="EBI-632216">
        <id>Q38827</id>
    </interactant>
    <interactant intactId="EBI-2112286">
        <id>O65154</id>
        <label>KIWI</label>
    </interactant>
    <organismsDiffer>false</organismsDiffer>
    <experiments>3</experiments>
</comment>
<comment type="interaction">
    <interactant intactId="EBI-632216">
        <id>Q38827</id>
    </interactant>
    <interactant intactId="EBI-15198743">
        <id>Q9LSI4</id>
        <label>MGH6.1</label>
    </interactant>
    <organismsDiffer>false</organismsDiffer>
    <experiments>3</experiments>
</comment>
<comment type="interaction">
    <interactant intactId="EBI-632216">
        <id>Q38827</id>
    </interactant>
    <interactant intactId="EBI-1238013">
        <id>O22179</id>
        <label>MYB70</label>
    </interactant>
    <organismsDiffer>false</organismsDiffer>
    <experiments>3</experiments>
</comment>
<comment type="interaction">
    <interactant intactId="EBI-632216">
        <id>Q38827</id>
    </interactant>
    <interactant intactId="EBI-25506855">
        <id>O23160</id>
        <label>MYB73</label>
    </interactant>
    <organismsDiffer>false</organismsDiffer>
    <experiments>3</experiments>
</comment>
<comment type="interaction">
    <interactant intactId="EBI-632216">
        <id>Q38827</id>
    </interactant>
    <interactant intactId="EBI-4444640">
        <id>Q84JP1</id>
        <label>NFYA7</label>
    </interactant>
    <organismsDiffer>false</organismsDiffer>
    <experiments>3</experiments>
</comment>
<comment type="interaction">
    <interactant intactId="EBI-632216">
        <id>Q38827</id>
    </interactant>
    <interactant intactId="EBI-4424877">
        <id>Q9S7W5</id>
        <label>TCP13</label>
    </interactant>
    <organismsDiffer>false</organismsDiffer>
    <experiments>3</experiments>
</comment>
<comment type="interaction">
    <interactant intactId="EBI-632216">
        <id>Q38827</id>
    </interactant>
    <interactant intactId="EBI-4426144">
        <id>Q9C9L2</id>
        <label>TCP15</label>
    </interactant>
    <organismsDiffer>false</organismsDiffer>
    <experiments>3</experiments>
</comment>
<comment type="interaction">
    <interactant intactId="EBI-632216">
        <id>Q38827</id>
    </interactant>
    <interactant intactId="EBI-15198627">
        <id>Q9M1U4</id>
        <label>TCP16</label>
    </interactant>
    <organismsDiffer>false</organismsDiffer>
    <experiments>3</experiments>
</comment>
<comment type="interaction">
    <interactant intactId="EBI-632216">
        <id>Q38827</id>
    </interactant>
    <interactant intactId="EBI-25522447">
        <id>Q9MAH8</id>
        <label>TCP3</label>
    </interactant>
    <organismsDiffer>false</organismsDiffer>
    <experiments>3</experiments>
</comment>
<comment type="interaction">
    <interactant intactId="EBI-632216">
        <id>Q38827</id>
    </interactant>
    <interactant intactId="EBI-1806701">
        <id>Q9LQW3</id>
        <label>ZHD14</label>
    </interactant>
    <organismsDiffer>false</organismsDiffer>
    <experiments>4</experiments>
</comment>
<comment type="subcellular location">
    <subcellularLocation>
        <location evidence="1">Nucleus</location>
    </subcellularLocation>
</comment>
<comment type="alternative products">
    <event type="alternative splicing"/>
    <isoform>
        <id>Q38827-1</id>
        <name>1</name>
        <sequence type="displayed"/>
    </isoform>
    <text>A number of isoforms are produced. According to EST sequences.</text>
</comment>
<comment type="tissue specificity">
    <text evidence="7">Highly expressed in the whole plant.</text>
</comment>
<comment type="induction">
    <text evidence="7">By auxin.</text>
</comment>
<comment type="domain">
    <text>The N-terminal half of the protein contains two conserved domains I and II. Domain I includes a slightly degenerated ERF-associated amphiphilic repression (EAR) motif which seems to be involved in the activity of transcriptional repression. Domain II is required for the correct degradation of the protein through the SCF-mediated ubiquitin-proteasome pathway. Interactions between Aux/IAA proteins and auxin response factors (ARFs) occur through their C-terminal dimerization domains III and IV.</text>
</comment>
<comment type="PTM">
    <text evidence="4">Phosphorylated by phytochrome A in vitro.</text>
</comment>
<comment type="similarity">
    <text evidence="8">Belongs to the Aux/IAA family.</text>
</comment>
<comment type="sequence caution" evidence="8">
    <conflict type="erroneous gene model prediction">
        <sequence resource="EMBL-CDS" id="BAB10673"/>
    </conflict>
</comment>
<dbReference type="EMBL" id="U18411">
    <property type="protein sequence ID" value="AAC49050.1"/>
    <property type="molecule type" value="mRNA"/>
</dbReference>
<dbReference type="EMBL" id="AB010075">
    <property type="protein sequence ID" value="BAB10673.1"/>
    <property type="status" value="ALT_SEQ"/>
    <property type="molecule type" value="Genomic_DNA"/>
</dbReference>
<dbReference type="EMBL" id="AL021684">
    <property type="protein sequence ID" value="CAA16692.1"/>
    <property type="molecule type" value="Genomic_DNA"/>
</dbReference>
<dbReference type="EMBL" id="CP002688">
    <property type="protein sequence ID" value="AED98084.1"/>
    <property type="molecule type" value="Genomic_DNA"/>
</dbReference>
<dbReference type="EMBL" id="AF334715">
    <property type="protein sequence ID" value="AAG50093.1"/>
    <property type="molecule type" value="mRNA"/>
</dbReference>
<dbReference type="EMBL" id="AY087089">
    <property type="protein sequence ID" value="AAM64650.1"/>
    <property type="molecule type" value="mRNA"/>
</dbReference>
<dbReference type="PIR" id="T05902">
    <property type="entry name" value="T05902"/>
</dbReference>
<dbReference type="RefSeq" id="NP_851275.1">
    <molecule id="Q38827-1"/>
    <property type="nucleotide sequence ID" value="NM_180944.3"/>
</dbReference>
<dbReference type="SMR" id="Q38827"/>
<dbReference type="BioGRID" id="21935">
    <property type="interactions" value="45"/>
</dbReference>
<dbReference type="ELM" id="Q38827"/>
<dbReference type="FunCoup" id="Q38827">
    <property type="interactions" value="1726"/>
</dbReference>
<dbReference type="IntAct" id="Q38827">
    <property type="interactions" value="42"/>
</dbReference>
<dbReference type="STRING" id="3702.Q38827"/>
<dbReference type="iPTMnet" id="Q38827"/>
<dbReference type="PaxDb" id="3702-AT5G65670.1"/>
<dbReference type="ProteomicsDB" id="232161">
    <molecule id="Q38827-1"/>
</dbReference>
<dbReference type="EnsemblPlants" id="AT5G65670.1">
    <molecule id="Q38827-1"/>
    <property type="protein sequence ID" value="AT5G65670.1"/>
    <property type="gene ID" value="AT5G65670"/>
</dbReference>
<dbReference type="GeneID" id="836693"/>
<dbReference type="Gramene" id="AT5G65670.1">
    <molecule id="Q38827-1"/>
    <property type="protein sequence ID" value="AT5G65670.1"/>
    <property type="gene ID" value="AT5G65670"/>
</dbReference>
<dbReference type="KEGG" id="ath:AT5G65670"/>
<dbReference type="Araport" id="AT5G65670"/>
<dbReference type="TAIR" id="AT5G65670">
    <property type="gene designation" value="IAA9"/>
</dbReference>
<dbReference type="eggNOG" id="ENOG502QUQJ">
    <property type="taxonomic scope" value="Eukaryota"/>
</dbReference>
<dbReference type="HOGENOM" id="CLU_049393_1_2_1"/>
<dbReference type="InParanoid" id="Q38827"/>
<dbReference type="OMA" id="DTEFPGN"/>
<dbReference type="OrthoDB" id="7848332at2759"/>
<dbReference type="PhylomeDB" id="Q38827"/>
<dbReference type="PRO" id="PR:Q38827"/>
<dbReference type="Proteomes" id="UP000006548">
    <property type="component" value="Chromosome 5"/>
</dbReference>
<dbReference type="ExpressionAtlas" id="Q38827">
    <property type="expression patterns" value="baseline and differential"/>
</dbReference>
<dbReference type="GO" id="GO:0005634">
    <property type="term" value="C:nucleus"/>
    <property type="evidence" value="ECO:0000250"/>
    <property type="project" value="TAIR"/>
</dbReference>
<dbReference type="GO" id="GO:0003700">
    <property type="term" value="F:DNA-binding transcription factor activity"/>
    <property type="evidence" value="ECO:0000250"/>
    <property type="project" value="TAIR"/>
</dbReference>
<dbReference type="GO" id="GO:0000976">
    <property type="term" value="F:transcription cis-regulatory region binding"/>
    <property type="evidence" value="ECO:0000353"/>
    <property type="project" value="TAIR"/>
</dbReference>
<dbReference type="GO" id="GO:0009734">
    <property type="term" value="P:auxin-activated signaling pathway"/>
    <property type="evidence" value="ECO:0000304"/>
    <property type="project" value="TAIR"/>
</dbReference>
<dbReference type="GO" id="GO:0009733">
    <property type="term" value="P:response to auxin"/>
    <property type="evidence" value="ECO:0000304"/>
    <property type="project" value="TAIR"/>
</dbReference>
<dbReference type="FunFam" id="3.10.20.90:FF:000078">
    <property type="entry name" value="Auxin-responsive protein"/>
    <property type="match status" value="1"/>
</dbReference>
<dbReference type="Gene3D" id="3.10.20.90">
    <property type="entry name" value="Phosphatidylinositol 3-kinase Catalytic Subunit, Chain A, domain 1"/>
    <property type="match status" value="1"/>
</dbReference>
<dbReference type="InterPro" id="IPR033389">
    <property type="entry name" value="AUX/IAA_dom"/>
</dbReference>
<dbReference type="InterPro" id="IPR003311">
    <property type="entry name" value="AUX_IAA"/>
</dbReference>
<dbReference type="InterPro" id="IPR053793">
    <property type="entry name" value="PB1-like"/>
</dbReference>
<dbReference type="PANTHER" id="PTHR31734">
    <property type="entry name" value="AUXIN-RESPONSIVE PROTEIN IAA17"/>
    <property type="match status" value="1"/>
</dbReference>
<dbReference type="PANTHER" id="PTHR31734:SF263">
    <property type="entry name" value="AUXIN-RESPONSIVE PROTEIN IAA9"/>
    <property type="match status" value="1"/>
</dbReference>
<dbReference type="Pfam" id="PF02309">
    <property type="entry name" value="AUX_IAA"/>
    <property type="match status" value="1"/>
</dbReference>
<dbReference type="SUPFAM" id="SSF54277">
    <property type="entry name" value="CAD &amp; PB1 domains"/>
    <property type="match status" value="1"/>
</dbReference>
<dbReference type="PROSITE" id="PS51745">
    <property type="entry name" value="PB1"/>
    <property type="match status" value="1"/>
</dbReference>
<proteinExistence type="evidence at protein level"/>
<organism>
    <name type="scientific">Arabidopsis thaliana</name>
    <name type="common">Mouse-ear cress</name>
    <dbReference type="NCBI Taxonomy" id="3702"/>
    <lineage>
        <taxon>Eukaryota</taxon>
        <taxon>Viridiplantae</taxon>
        <taxon>Streptophyta</taxon>
        <taxon>Embryophyta</taxon>
        <taxon>Tracheophyta</taxon>
        <taxon>Spermatophyta</taxon>
        <taxon>Magnoliopsida</taxon>
        <taxon>eudicotyledons</taxon>
        <taxon>Gunneridae</taxon>
        <taxon>Pentapetalae</taxon>
        <taxon>rosids</taxon>
        <taxon>malvids</taxon>
        <taxon>Brassicales</taxon>
        <taxon>Brassicaceae</taxon>
        <taxon>Camelineae</taxon>
        <taxon>Arabidopsis</taxon>
    </lineage>
</organism>
<sequence>MSPEEELQSNVSVASSSPTSNCISRNTLGGLKEHNYLGLSDCSSVGSSTLSPLAEDDKATISLKATELTLGLPGSQSPARDTELNLLSPAKLDEKPFFPLLPSKDEICSSSQKNNASGNKRGFSDTMDQFAEAKSSVYTEKNWMFPEAAATQSVTKKDVPQNIPKGQSSTTNNSSSPPAAKAQIVGWPPVRSYRKNTLATTCKNSDEVDGRPGSGALFVKVSMDGAPYLRKVDLRSYTNYGELSSALEKMFTTFTLGQCGSNGAAGKDMLSETKLKDLLNGKDYVLTYEDKDGDWMLVGDVPWEMFIDVCKKLKIMKGCDAIGLAAAPRAMEKSKMRA</sequence>
<keyword id="KW-0025">Alternative splicing</keyword>
<keyword id="KW-0927">Auxin signaling pathway</keyword>
<keyword id="KW-0539">Nucleus</keyword>
<keyword id="KW-0597">Phosphoprotein</keyword>
<keyword id="KW-1185">Reference proteome</keyword>
<keyword id="KW-0678">Repressor</keyword>
<keyword id="KW-0804">Transcription</keyword>
<keyword id="KW-0805">Transcription regulation</keyword>
<accession>Q38827</accession>
<accession>Q8LBP2</accession>
<accession>Q9FLH4</accession>
<reference key="1">
    <citation type="journal article" date="1995" name="J. Mol. Biol.">
        <title>The PS-IAA4/5-like family of early auxin-inducible mRNAs in Arabidopsis thaliana.</title>
        <authorList>
            <person name="Abel S."/>
            <person name="Nguyen M.D."/>
            <person name="Theologis A."/>
        </authorList>
    </citation>
    <scope>NUCLEOTIDE SEQUENCE [MRNA]</scope>
    <scope>TISSUE SPECIFICITY</scope>
    <scope>INDUCTION</scope>
    <source>
        <strain>cv. Columbia</strain>
    </source>
</reference>
<reference key="2">
    <citation type="journal article" date="1998" name="DNA Res.">
        <title>Structural analysis of Arabidopsis thaliana chromosome 5. IV. Sequence features of the regions of 1,456,315 bp covered by nineteen physically assigned P1 and TAC clones.</title>
        <authorList>
            <person name="Sato S."/>
            <person name="Kaneko T."/>
            <person name="Kotani H."/>
            <person name="Nakamura Y."/>
            <person name="Asamizu E."/>
            <person name="Miyajima N."/>
            <person name="Tabata S."/>
        </authorList>
    </citation>
    <scope>NUCLEOTIDE SEQUENCE [LARGE SCALE GENOMIC DNA]</scope>
    <source>
        <strain>cv. Columbia</strain>
    </source>
</reference>
<reference key="3">
    <citation type="journal article" date="2000" name="Nature">
        <title>Sequence and analysis of chromosome 5 of the plant Arabidopsis thaliana.</title>
        <authorList>
            <person name="Tabata S."/>
            <person name="Kaneko T."/>
            <person name="Nakamura Y."/>
            <person name="Kotani H."/>
            <person name="Kato T."/>
            <person name="Asamizu E."/>
            <person name="Miyajima N."/>
            <person name="Sasamoto S."/>
            <person name="Kimura T."/>
            <person name="Hosouchi T."/>
            <person name="Kawashima K."/>
            <person name="Kohara M."/>
            <person name="Matsumoto M."/>
            <person name="Matsuno A."/>
            <person name="Muraki A."/>
            <person name="Nakayama S."/>
            <person name="Nakazaki N."/>
            <person name="Naruo K."/>
            <person name="Okumura S."/>
            <person name="Shinpo S."/>
            <person name="Takeuchi C."/>
            <person name="Wada T."/>
            <person name="Watanabe A."/>
            <person name="Yamada M."/>
            <person name="Yasuda M."/>
            <person name="Sato S."/>
            <person name="de la Bastide M."/>
            <person name="Huang E."/>
            <person name="Spiegel L."/>
            <person name="Gnoj L."/>
            <person name="O'Shaughnessy A."/>
            <person name="Preston R."/>
            <person name="Habermann K."/>
            <person name="Murray J."/>
            <person name="Johnson D."/>
            <person name="Rohlfing T."/>
            <person name="Nelson J."/>
            <person name="Stoneking T."/>
            <person name="Pepin K."/>
            <person name="Spieth J."/>
            <person name="Sekhon M."/>
            <person name="Armstrong J."/>
            <person name="Becker M."/>
            <person name="Belter E."/>
            <person name="Cordum H."/>
            <person name="Cordes M."/>
            <person name="Courtney L."/>
            <person name="Courtney W."/>
            <person name="Dante M."/>
            <person name="Du H."/>
            <person name="Edwards J."/>
            <person name="Fryman J."/>
            <person name="Haakensen B."/>
            <person name="Lamar E."/>
            <person name="Latreille P."/>
            <person name="Leonard S."/>
            <person name="Meyer R."/>
            <person name="Mulvaney E."/>
            <person name="Ozersky P."/>
            <person name="Riley A."/>
            <person name="Strowmatt C."/>
            <person name="Wagner-McPherson C."/>
            <person name="Wollam A."/>
            <person name="Yoakum M."/>
            <person name="Bell M."/>
            <person name="Dedhia N."/>
            <person name="Parnell L."/>
            <person name="Shah R."/>
            <person name="Rodriguez M."/>
            <person name="Hoon See L."/>
            <person name="Vil D."/>
            <person name="Baker J."/>
            <person name="Kirchoff K."/>
            <person name="Toth K."/>
            <person name="King L."/>
            <person name="Bahret A."/>
            <person name="Miller B."/>
            <person name="Marra M.A."/>
            <person name="Martienssen R."/>
            <person name="McCombie W.R."/>
            <person name="Wilson R.K."/>
            <person name="Murphy G."/>
            <person name="Bancroft I."/>
            <person name="Volckaert G."/>
            <person name="Wambutt R."/>
            <person name="Duesterhoeft A."/>
            <person name="Stiekema W."/>
            <person name="Pohl T."/>
            <person name="Entian K.-D."/>
            <person name="Terryn N."/>
            <person name="Hartley N."/>
            <person name="Bent E."/>
            <person name="Johnson S."/>
            <person name="Langham S.-A."/>
            <person name="McCullagh B."/>
            <person name="Robben J."/>
            <person name="Grymonprez B."/>
            <person name="Zimmermann W."/>
            <person name="Ramsperger U."/>
            <person name="Wedler H."/>
            <person name="Balke K."/>
            <person name="Wedler E."/>
            <person name="Peters S."/>
            <person name="van Staveren M."/>
            <person name="Dirkse W."/>
            <person name="Mooijman P."/>
            <person name="Klein Lankhorst R."/>
            <person name="Weitzenegger T."/>
            <person name="Bothe G."/>
            <person name="Rose M."/>
            <person name="Hauf J."/>
            <person name="Berneiser S."/>
            <person name="Hempel S."/>
            <person name="Feldpausch M."/>
            <person name="Lamberth S."/>
            <person name="Villarroel R."/>
            <person name="Gielen J."/>
            <person name="Ardiles W."/>
            <person name="Bents O."/>
            <person name="Lemcke K."/>
            <person name="Kolesov G."/>
            <person name="Mayer K.F.X."/>
            <person name="Rudd S."/>
            <person name="Schoof H."/>
            <person name="Schueller C."/>
            <person name="Zaccaria P."/>
            <person name="Mewes H.-W."/>
            <person name="Bevan M."/>
            <person name="Fransz P.F."/>
        </authorList>
    </citation>
    <scope>NUCLEOTIDE SEQUENCE [LARGE SCALE GENOMIC DNA]</scope>
    <source>
        <strain>cv. Columbia</strain>
    </source>
</reference>
<reference key="4">
    <citation type="journal article" date="2017" name="Plant J.">
        <title>Araport11: a complete reannotation of the Arabidopsis thaliana reference genome.</title>
        <authorList>
            <person name="Cheng C.Y."/>
            <person name="Krishnakumar V."/>
            <person name="Chan A.P."/>
            <person name="Thibaud-Nissen F."/>
            <person name="Schobel S."/>
            <person name="Town C.D."/>
        </authorList>
    </citation>
    <scope>GENOME REANNOTATION</scope>
    <source>
        <strain>cv. Columbia</strain>
    </source>
</reference>
<reference key="5">
    <citation type="journal article" date="2003" name="Science">
        <title>Empirical analysis of transcriptional activity in the Arabidopsis genome.</title>
        <authorList>
            <person name="Yamada K."/>
            <person name="Lim J."/>
            <person name="Dale J.M."/>
            <person name="Chen H."/>
            <person name="Shinn P."/>
            <person name="Palm C.J."/>
            <person name="Southwick A.M."/>
            <person name="Wu H.C."/>
            <person name="Kim C.J."/>
            <person name="Nguyen M."/>
            <person name="Pham P.K."/>
            <person name="Cheuk R.F."/>
            <person name="Karlin-Newmann G."/>
            <person name="Liu S.X."/>
            <person name="Lam B."/>
            <person name="Sakano H."/>
            <person name="Wu T."/>
            <person name="Yu G."/>
            <person name="Miranda M."/>
            <person name="Quach H.L."/>
            <person name="Tripp M."/>
            <person name="Chang C.H."/>
            <person name="Lee J.M."/>
            <person name="Toriumi M.J."/>
            <person name="Chan M.M."/>
            <person name="Tang C.C."/>
            <person name="Onodera C.S."/>
            <person name="Deng J.M."/>
            <person name="Akiyama K."/>
            <person name="Ansari Y."/>
            <person name="Arakawa T."/>
            <person name="Banh J."/>
            <person name="Banno F."/>
            <person name="Bowser L."/>
            <person name="Brooks S.Y."/>
            <person name="Carninci P."/>
            <person name="Chao Q."/>
            <person name="Choy N."/>
            <person name="Enju A."/>
            <person name="Goldsmith A.D."/>
            <person name="Gurjal M."/>
            <person name="Hansen N.F."/>
            <person name="Hayashizaki Y."/>
            <person name="Johnson-Hopson C."/>
            <person name="Hsuan V.W."/>
            <person name="Iida K."/>
            <person name="Karnes M."/>
            <person name="Khan S."/>
            <person name="Koesema E."/>
            <person name="Ishida J."/>
            <person name="Jiang P.X."/>
            <person name="Jones T."/>
            <person name="Kawai J."/>
            <person name="Kamiya A."/>
            <person name="Meyers C."/>
            <person name="Nakajima M."/>
            <person name="Narusaka M."/>
            <person name="Seki M."/>
            <person name="Sakurai T."/>
            <person name="Satou M."/>
            <person name="Tamse R."/>
            <person name="Vaysberg M."/>
            <person name="Wallender E.K."/>
            <person name="Wong C."/>
            <person name="Yamamura Y."/>
            <person name="Yuan S."/>
            <person name="Shinozaki K."/>
            <person name="Davis R.W."/>
            <person name="Theologis A."/>
            <person name="Ecker J.R."/>
        </authorList>
    </citation>
    <scope>NUCLEOTIDE SEQUENCE [LARGE SCALE MRNA]</scope>
    <source>
        <strain>cv. Columbia</strain>
    </source>
</reference>
<reference key="6">
    <citation type="submission" date="2002-03" db="EMBL/GenBank/DDBJ databases">
        <title>Full-length cDNA from Arabidopsis thaliana.</title>
        <authorList>
            <person name="Brover V.V."/>
            <person name="Troukhan M.E."/>
            <person name="Alexandrov N.A."/>
            <person name="Lu Y.-P."/>
            <person name="Flavell R.B."/>
            <person name="Feldmann K.A."/>
        </authorList>
    </citation>
    <scope>NUCLEOTIDE SEQUENCE [LARGE SCALE MRNA]</scope>
</reference>
<reference key="7">
    <citation type="journal article" date="2000" name="Plant Physiol.">
        <title>Aux/IAA proteins are phosphorylated by phytochrome in vitro.</title>
        <authorList>
            <person name="Colon-Carmona A."/>
            <person name="Chen D.L."/>
            <person name="Yeh K.-C."/>
            <person name="Abel S."/>
        </authorList>
    </citation>
    <scope>PHOSPHORYLATION BY PHYTOCHROME A</scope>
</reference>
<reference key="8">
    <citation type="journal article" date="2002" name="Plant Mol. Biol.">
        <title>Genetics of Aux/IAA and ARF action in plant growth and development.</title>
        <authorList>
            <person name="Liscum E."/>
            <person name="Reed J.W."/>
        </authorList>
    </citation>
    <scope>GENE FAMILY</scope>
    <scope>NOMENCLATURE</scope>
    <scope>FUNCTION</scope>
</reference>
<reference key="9">
    <citation type="journal article" date="2004" name="Plant Cell">
        <title>Aux/IAA proteins contain a potent transcriptional repression domain.</title>
        <authorList>
            <person name="Tiwari S.B."/>
            <person name="Hagen G."/>
            <person name="Guilfoyle T.J."/>
        </authorList>
    </citation>
    <scope>TRANSCRIPTIONAL REPRESSION DOMAIN</scope>
</reference>
<reference key="10">
    <citation type="journal article" date="2008" name="Science">
        <title>TOPLESS mediates auxin-dependent transcriptional repression during Arabidopsis embryogenesis.</title>
        <authorList>
            <person name="Szemenyei H."/>
            <person name="Hannon M."/>
            <person name="Long J.A."/>
        </authorList>
    </citation>
    <scope>INTERACTION WITH TPL</scope>
</reference>
<reference key="11">
    <citation type="journal article" date="2009" name="Plant Physiol.">
        <title>Large-scale Arabidopsis phosphoproteome profiling reveals novel chloroplast kinase substrates and phosphorylation networks.</title>
        <authorList>
            <person name="Reiland S."/>
            <person name="Messerli G."/>
            <person name="Baerenfaller K."/>
            <person name="Gerrits B."/>
            <person name="Endler A."/>
            <person name="Grossmann J."/>
            <person name="Gruissem W."/>
            <person name="Baginsky S."/>
        </authorList>
    </citation>
    <scope>IDENTIFICATION BY MASS SPECTROMETRY [LARGE SCALE ANALYSIS]</scope>
</reference>
<evidence type="ECO:0000250" key="1"/>
<evidence type="ECO:0000255" key="2">
    <source>
        <dbReference type="PROSITE-ProRule" id="PRU01081"/>
    </source>
</evidence>
<evidence type="ECO:0000256" key="3">
    <source>
        <dbReference type="SAM" id="MobiDB-lite"/>
    </source>
</evidence>
<evidence type="ECO:0000269" key="4">
    <source>
    </source>
</evidence>
<evidence type="ECO:0000269" key="5">
    <source>
    </source>
</evidence>
<evidence type="ECO:0000269" key="6">
    <source>
    </source>
</evidence>
<evidence type="ECO:0000269" key="7">
    <source>
    </source>
</evidence>
<evidence type="ECO:0000305" key="8"/>
<name>IAA9_ARATH</name>